<evidence type="ECO:0000250" key="1">
    <source>
        <dbReference type="UniProtKB" id="Q66H17"/>
    </source>
</evidence>
<evidence type="ECO:0000256" key="2">
    <source>
        <dbReference type="SAM" id="MobiDB-lite"/>
    </source>
</evidence>
<evidence type="ECO:0000269" key="3">
    <source>
    </source>
</evidence>
<keyword id="KW-0597">Phosphoprotein</keyword>
<keyword id="KW-1185">Reference proteome</keyword>
<comment type="subunit">
    <text evidence="3">Interacts with syntaxin-1 and ACTB.</text>
</comment>
<comment type="tissue specificity">
    <text evidence="3">Highly expressed in the testis and weakly in the brain and heart.</text>
</comment>
<name>SPT32_MOUSE</name>
<reference key="1">
    <citation type="journal article" date="2008" name="Mol. Hum. Reprod.">
        <title>Characterization of an acrosome protein VAD1.2/AEP2 which is differentially expressed in spermatogenesis.</title>
        <authorList>
            <person name="Lee K.F."/>
            <person name="Tam Y.T."/>
            <person name="Zuo Y."/>
            <person name="Cheong A.W."/>
            <person name="Pang R.T."/>
            <person name="Lee N.P."/>
            <person name="Shum C.K."/>
            <person name="Tam P.C."/>
            <person name="Cheung A.N."/>
            <person name="Yang Z.M."/>
            <person name="Yeung W.S."/>
            <person name="Luk J.M."/>
        </authorList>
    </citation>
    <scope>NUCLEOTIDE SEQUENCE [MRNA]</scope>
    <scope>TISSUE SPECIFICITY</scope>
    <scope>INTERACTION WITH SYNTAXIN-1 AND ACTB</scope>
    <source>
        <strain>BALB/cJ</strain>
        <tissue>Testis</tissue>
    </source>
</reference>
<reference key="2">
    <citation type="journal article" date="2005" name="Science">
        <title>The transcriptional landscape of the mammalian genome.</title>
        <authorList>
            <person name="Carninci P."/>
            <person name="Kasukawa T."/>
            <person name="Katayama S."/>
            <person name="Gough J."/>
            <person name="Frith M.C."/>
            <person name="Maeda N."/>
            <person name="Oyama R."/>
            <person name="Ravasi T."/>
            <person name="Lenhard B."/>
            <person name="Wells C."/>
            <person name="Kodzius R."/>
            <person name="Shimokawa K."/>
            <person name="Bajic V.B."/>
            <person name="Brenner S.E."/>
            <person name="Batalov S."/>
            <person name="Forrest A.R."/>
            <person name="Zavolan M."/>
            <person name="Davis M.J."/>
            <person name="Wilming L.G."/>
            <person name="Aidinis V."/>
            <person name="Allen J.E."/>
            <person name="Ambesi-Impiombato A."/>
            <person name="Apweiler R."/>
            <person name="Aturaliya R.N."/>
            <person name="Bailey T.L."/>
            <person name="Bansal M."/>
            <person name="Baxter L."/>
            <person name="Beisel K.W."/>
            <person name="Bersano T."/>
            <person name="Bono H."/>
            <person name="Chalk A.M."/>
            <person name="Chiu K.P."/>
            <person name="Choudhary V."/>
            <person name="Christoffels A."/>
            <person name="Clutterbuck D.R."/>
            <person name="Crowe M.L."/>
            <person name="Dalla E."/>
            <person name="Dalrymple B.P."/>
            <person name="de Bono B."/>
            <person name="Della Gatta G."/>
            <person name="di Bernardo D."/>
            <person name="Down T."/>
            <person name="Engstrom P."/>
            <person name="Fagiolini M."/>
            <person name="Faulkner G."/>
            <person name="Fletcher C.F."/>
            <person name="Fukushima T."/>
            <person name="Furuno M."/>
            <person name="Futaki S."/>
            <person name="Gariboldi M."/>
            <person name="Georgii-Hemming P."/>
            <person name="Gingeras T.R."/>
            <person name="Gojobori T."/>
            <person name="Green R.E."/>
            <person name="Gustincich S."/>
            <person name="Harbers M."/>
            <person name="Hayashi Y."/>
            <person name="Hensch T.K."/>
            <person name="Hirokawa N."/>
            <person name="Hill D."/>
            <person name="Huminiecki L."/>
            <person name="Iacono M."/>
            <person name="Ikeo K."/>
            <person name="Iwama A."/>
            <person name="Ishikawa T."/>
            <person name="Jakt M."/>
            <person name="Kanapin A."/>
            <person name="Katoh M."/>
            <person name="Kawasawa Y."/>
            <person name="Kelso J."/>
            <person name="Kitamura H."/>
            <person name="Kitano H."/>
            <person name="Kollias G."/>
            <person name="Krishnan S.P."/>
            <person name="Kruger A."/>
            <person name="Kummerfeld S.K."/>
            <person name="Kurochkin I.V."/>
            <person name="Lareau L.F."/>
            <person name="Lazarevic D."/>
            <person name="Lipovich L."/>
            <person name="Liu J."/>
            <person name="Liuni S."/>
            <person name="McWilliam S."/>
            <person name="Madan Babu M."/>
            <person name="Madera M."/>
            <person name="Marchionni L."/>
            <person name="Matsuda H."/>
            <person name="Matsuzawa S."/>
            <person name="Miki H."/>
            <person name="Mignone F."/>
            <person name="Miyake S."/>
            <person name="Morris K."/>
            <person name="Mottagui-Tabar S."/>
            <person name="Mulder N."/>
            <person name="Nakano N."/>
            <person name="Nakauchi H."/>
            <person name="Ng P."/>
            <person name="Nilsson R."/>
            <person name="Nishiguchi S."/>
            <person name="Nishikawa S."/>
            <person name="Nori F."/>
            <person name="Ohara O."/>
            <person name="Okazaki Y."/>
            <person name="Orlando V."/>
            <person name="Pang K.C."/>
            <person name="Pavan W.J."/>
            <person name="Pavesi G."/>
            <person name="Pesole G."/>
            <person name="Petrovsky N."/>
            <person name="Piazza S."/>
            <person name="Reed J."/>
            <person name="Reid J.F."/>
            <person name="Ring B.Z."/>
            <person name="Ringwald M."/>
            <person name="Rost B."/>
            <person name="Ruan Y."/>
            <person name="Salzberg S.L."/>
            <person name="Sandelin A."/>
            <person name="Schneider C."/>
            <person name="Schoenbach C."/>
            <person name="Sekiguchi K."/>
            <person name="Semple C.A."/>
            <person name="Seno S."/>
            <person name="Sessa L."/>
            <person name="Sheng Y."/>
            <person name="Shibata Y."/>
            <person name="Shimada H."/>
            <person name="Shimada K."/>
            <person name="Silva D."/>
            <person name="Sinclair B."/>
            <person name="Sperling S."/>
            <person name="Stupka E."/>
            <person name="Sugiura K."/>
            <person name="Sultana R."/>
            <person name="Takenaka Y."/>
            <person name="Taki K."/>
            <person name="Tammoja K."/>
            <person name="Tan S.L."/>
            <person name="Tang S."/>
            <person name="Taylor M.S."/>
            <person name="Tegner J."/>
            <person name="Teichmann S.A."/>
            <person name="Ueda H.R."/>
            <person name="van Nimwegen E."/>
            <person name="Verardo R."/>
            <person name="Wei C.L."/>
            <person name="Yagi K."/>
            <person name="Yamanishi H."/>
            <person name="Zabarovsky E."/>
            <person name="Zhu S."/>
            <person name="Zimmer A."/>
            <person name="Hide W."/>
            <person name="Bult C."/>
            <person name="Grimmond S.M."/>
            <person name="Teasdale R.D."/>
            <person name="Liu E.T."/>
            <person name="Brusic V."/>
            <person name="Quackenbush J."/>
            <person name="Wahlestedt C."/>
            <person name="Mattick J.S."/>
            <person name="Hume D.A."/>
            <person name="Kai C."/>
            <person name="Sasaki D."/>
            <person name="Tomaru Y."/>
            <person name="Fukuda S."/>
            <person name="Kanamori-Katayama M."/>
            <person name="Suzuki M."/>
            <person name="Aoki J."/>
            <person name="Arakawa T."/>
            <person name="Iida J."/>
            <person name="Imamura K."/>
            <person name="Itoh M."/>
            <person name="Kato T."/>
            <person name="Kawaji H."/>
            <person name="Kawagashira N."/>
            <person name="Kawashima T."/>
            <person name="Kojima M."/>
            <person name="Kondo S."/>
            <person name="Konno H."/>
            <person name="Nakano K."/>
            <person name="Ninomiya N."/>
            <person name="Nishio T."/>
            <person name="Okada M."/>
            <person name="Plessy C."/>
            <person name="Shibata K."/>
            <person name="Shiraki T."/>
            <person name="Suzuki S."/>
            <person name="Tagami M."/>
            <person name="Waki K."/>
            <person name="Watahiki A."/>
            <person name="Okamura-Oho Y."/>
            <person name="Suzuki H."/>
            <person name="Kawai J."/>
            <person name="Hayashizaki Y."/>
        </authorList>
    </citation>
    <scope>NUCLEOTIDE SEQUENCE [LARGE SCALE MRNA]</scope>
    <source>
        <strain>C57BL/6J</strain>
        <tissue>Testis</tissue>
    </source>
</reference>
<reference key="3">
    <citation type="journal article" date="2009" name="PLoS Biol.">
        <title>Lineage-specific biology revealed by a finished genome assembly of the mouse.</title>
        <authorList>
            <person name="Church D.M."/>
            <person name="Goodstadt L."/>
            <person name="Hillier L.W."/>
            <person name="Zody M.C."/>
            <person name="Goldstein S."/>
            <person name="She X."/>
            <person name="Bult C.J."/>
            <person name="Agarwala R."/>
            <person name="Cherry J.L."/>
            <person name="DiCuccio M."/>
            <person name="Hlavina W."/>
            <person name="Kapustin Y."/>
            <person name="Meric P."/>
            <person name="Maglott D."/>
            <person name="Birtle Z."/>
            <person name="Marques A.C."/>
            <person name="Graves T."/>
            <person name="Zhou S."/>
            <person name="Teague B."/>
            <person name="Potamousis K."/>
            <person name="Churas C."/>
            <person name="Place M."/>
            <person name="Herschleb J."/>
            <person name="Runnheim R."/>
            <person name="Forrest D."/>
            <person name="Amos-Landgraf J."/>
            <person name="Schwartz D.C."/>
            <person name="Cheng Z."/>
            <person name="Lindblad-Toh K."/>
            <person name="Eichler E.E."/>
            <person name="Ponting C.P."/>
        </authorList>
    </citation>
    <scope>NUCLEOTIDE SEQUENCE [LARGE SCALE GENOMIC DNA]</scope>
    <source>
        <strain>C57BL/6J</strain>
    </source>
</reference>
<reference key="4">
    <citation type="submission" date="2005-07" db="EMBL/GenBank/DDBJ databases">
        <authorList>
            <person name="Mural R.J."/>
            <person name="Adams M.D."/>
            <person name="Myers E.W."/>
            <person name="Smith H.O."/>
            <person name="Venter J.C."/>
        </authorList>
    </citation>
    <scope>NUCLEOTIDE SEQUENCE [LARGE SCALE GENOMIC DNA]</scope>
</reference>
<reference key="5">
    <citation type="journal article" date="2004" name="Genome Res.">
        <title>The status, quality, and expansion of the NIH full-length cDNA project: the Mammalian Gene Collection (MGC).</title>
        <authorList>
            <consortium name="The MGC Project Team"/>
        </authorList>
    </citation>
    <scope>NUCLEOTIDE SEQUENCE [LARGE SCALE MRNA]</scope>
    <source>
        <tissue>Testis</tissue>
    </source>
</reference>
<feature type="chain" id="PRO_0000420265" description="Spermatogenesis-associated protein 32">
    <location>
        <begin position="1"/>
        <end position="334"/>
    </location>
</feature>
<feature type="region of interest" description="Disordered" evidence="2">
    <location>
        <begin position="24"/>
        <end position="98"/>
    </location>
</feature>
<feature type="compositionally biased region" description="Acidic residues" evidence="2">
    <location>
        <begin position="37"/>
        <end position="47"/>
    </location>
</feature>
<feature type="compositionally biased region" description="Basic and acidic residues" evidence="2">
    <location>
        <begin position="48"/>
        <end position="60"/>
    </location>
</feature>
<feature type="compositionally biased region" description="Polar residues" evidence="2">
    <location>
        <begin position="77"/>
        <end position="98"/>
    </location>
</feature>
<feature type="modified residue" description="Phosphoserine" evidence="1">
    <location>
        <position position="135"/>
    </location>
</feature>
<feature type="modified residue" description="Phosphoserine" evidence="1">
    <location>
        <position position="138"/>
    </location>
</feature>
<sequence length="334" mass="37222">MGVTGISTFPCCGKDSVDIVERQSDHHRHHHHHTHEENEDEDTEVEAELPRTEPPPKVDPELGPVPQLEEMEPELPSKTTPETEGDSYTESPEQQNYRMESLKPYEEEEMGGRYRSIPVQTSKHLFWSNKLIQASEHSLQKALEKHHRSPQEKSISISQVYTECTQPPSSPPVSRPTTPTAIGLADLINFASSLAVASSSNMALPNLENMIKGTSEKSQNTSLDFCQPVQAIKFAQATQITQISSEKQDESPKSMAHKSWTRETRNVACSYLDINQAGLKTATIQGEVKFVQTPIASPQLQEAKEDSVPGTKKGNPLLLKIHFKLSSPQPQRND</sequence>
<accession>Q8C5V0</accession>
<dbReference type="EMBL" id="DQ118647">
    <property type="protein sequence ID" value="AAZ38360.1"/>
    <property type="molecule type" value="mRNA"/>
</dbReference>
<dbReference type="EMBL" id="AK077068">
    <property type="protein sequence ID" value="BAC36591.1"/>
    <property type="molecule type" value="mRNA"/>
</dbReference>
<dbReference type="EMBL" id="AL662804">
    <property type="status" value="NOT_ANNOTATED_CDS"/>
    <property type="molecule type" value="Genomic_DNA"/>
</dbReference>
<dbReference type="EMBL" id="CH466558">
    <property type="protein sequence ID" value="EDL34182.1"/>
    <property type="molecule type" value="Genomic_DNA"/>
</dbReference>
<dbReference type="EMBL" id="BC117072">
    <property type="protein sequence ID" value="AAI17073.1"/>
    <property type="molecule type" value="mRNA"/>
</dbReference>
<dbReference type="EMBL" id="BC120775">
    <property type="protein sequence ID" value="AAI20776.1"/>
    <property type="molecule type" value="mRNA"/>
</dbReference>
<dbReference type="CCDS" id="CCDS25515.1"/>
<dbReference type="RefSeq" id="NP_808469.1">
    <property type="nucleotide sequence ID" value="NM_177801.3"/>
</dbReference>
<dbReference type="FunCoup" id="Q8C5V0">
    <property type="interactions" value="126"/>
</dbReference>
<dbReference type="STRING" id="10090.ENSMUSP00000099365"/>
<dbReference type="PhosphoSitePlus" id="Q8C5V0"/>
<dbReference type="PaxDb" id="10090-ENSMUSP00000099365"/>
<dbReference type="ProteomicsDB" id="257389"/>
<dbReference type="Pumba" id="Q8C5V0"/>
<dbReference type="Antibodypedia" id="17631">
    <property type="antibodies" value="14 antibodies from 8 providers"/>
</dbReference>
<dbReference type="Ensembl" id="ENSMUST00000103076.2">
    <property type="protein sequence ID" value="ENSMUSP00000099365.2"/>
    <property type="gene ID" value="ENSMUSG00000044787.8"/>
</dbReference>
<dbReference type="GeneID" id="328019"/>
<dbReference type="KEGG" id="mmu:328019"/>
<dbReference type="UCSC" id="uc007ltz.1">
    <property type="organism name" value="mouse"/>
</dbReference>
<dbReference type="AGR" id="MGI:3045340"/>
<dbReference type="CTD" id="124783"/>
<dbReference type="MGI" id="MGI:3045340">
    <property type="gene designation" value="Spata32"/>
</dbReference>
<dbReference type="VEuPathDB" id="HostDB:ENSMUSG00000044787"/>
<dbReference type="eggNOG" id="ENOG502RU2T">
    <property type="taxonomic scope" value="Eukaryota"/>
</dbReference>
<dbReference type="GeneTree" id="ENSGT00390000006879"/>
<dbReference type="HOGENOM" id="CLU_064427_0_0_1"/>
<dbReference type="InParanoid" id="Q8C5V0"/>
<dbReference type="OMA" id="ACHHSIS"/>
<dbReference type="OrthoDB" id="9625284at2759"/>
<dbReference type="PhylomeDB" id="Q8C5V0"/>
<dbReference type="TreeFam" id="TF338309"/>
<dbReference type="BioGRID-ORCS" id="328019">
    <property type="hits" value="1 hit in 77 CRISPR screens"/>
</dbReference>
<dbReference type="ChiTaRS" id="Spata32">
    <property type="organism name" value="mouse"/>
</dbReference>
<dbReference type="PRO" id="PR:Q8C5V0"/>
<dbReference type="Proteomes" id="UP000000589">
    <property type="component" value="Chromosome 11"/>
</dbReference>
<dbReference type="RNAct" id="Q8C5V0">
    <property type="molecule type" value="protein"/>
</dbReference>
<dbReference type="Bgee" id="ENSMUSG00000044787">
    <property type="expression patterns" value="Expressed in testis and 17 other cell types or tissues"/>
</dbReference>
<dbReference type="GO" id="GO:0007283">
    <property type="term" value="P:spermatogenesis"/>
    <property type="evidence" value="ECO:0007669"/>
    <property type="project" value="InterPro"/>
</dbReference>
<dbReference type="InterPro" id="IPR029297">
    <property type="entry name" value="SPATA32"/>
</dbReference>
<dbReference type="PANTHER" id="PTHR37338">
    <property type="entry name" value="SPERMATOGENESIS-ASSOCIATED PROTEIN 32"/>
    <property type="match status" value="1"/>
</dbReference>
<dbReference type="PANTHER" id="PTHR37338:SF1">
    <property type="entry name" value="SPERMATOGENESIS-ASSOCIATED PROTEIN 32"/>
    <property type="match status" value="1"/>
</dbReference>
<dbReference type="Pfam" id="PF15310">
    <property type="entry name" value="VAD1-2"/>
    <property type="match status" value="1"/>
</dbReference>
<gene>
    <name type="primary">Spata32</name>
    <name type="synonym">Aep2</name>
    <name type="synonym">Vad1.2</name>
</gene>
<protein>
    <recommendedName>
        <fullName>Spermatogenesis-associated protein 32</fullName>
    </recommendedName>
    <alternativeName>
        <fullName>Acrosome expressed protein 2</fullName>
    </alternativeName>
</protein>
<proteinExistence type="evidence at protein level"/>
<organism>
    <name type="scientific">Mus musculus</name>
    <name type="common">Mouse</name>
    <dbReference type="NCBI Taxonomy" id="10090"/>
    <lineage>
        <taxon>Eukaryota</taxon>
        <taxon>Metazoa</taxon>
        <taxon>Chordata</taxon>
        <taxon>Craniata</taxon>
        <taxon>Vertebrata</taxon>
        <taxon>Euteleostomi</taxon>
        <taxon>Mammalia</taxon>
        <taxon>Eutheria</taxon>
        <taxon>Euarchontoglires</taxon>
        <taxon>Glires</taxon>
        <taxon>Rodentia</taxon>
        <taxon>Myomorpha</taxon>
        <taxon>Muroidea</taxon>
        <taxon>Muridae</taxon>
        <taxon>Murinae</taxon>
        <taxon>Mus</taxon>
        <taxon>Mus</taxon>
    </lineage>
</organism>